<accession>O29392</accession>
<evidence type="ECO:0000305" key="1"/>
<sequence>MEKEIIITTTETVPQREVAEILGVVFGNTVRAKHVGKDILAGLKNIVGGEIEEYTEMLRDARMEALNRMIKEAKKLGADAVVNVRFTTSQTMAGAAELLAYGTAVRLR</sequence>
<reference key="1">
    <citation type="journal article" date="1997" name="Nature">
        <title>The complete genome sequence of the hyperthermophilic, sulphate-reducing archaeon Archaeoglobus fulgidus.</title>
        <authorList>
            <person name="Klenk H.-P."/>
            <person name="Clayton R.A."/>
            <person name="Tomb J.-F."/>
            <person name="White O."/>
            <person name="Nelson K.E."/>
            <person name="Ketchum K.A."/>
            <person name="Dodson R.J."/>
            <person name="Gwinn M.L."/>
            <person name="Hickey E.K."/>
            <person name="Peterson J.D."/>
            <person name="Richardson D.L."/>
            <person name="Kerlavage A.R."/>
            <person name="Graham D.E."/>
            <person name="Kyrpides N.C."/>
            <person name="Fleischmann R.D."/>
            <person name="Quackenbush J."/>
            <person name="Lee N.H."/>
            <person name="Sutton G.G."/>
            <person name="Gill S.R."/>
            <person name="Kirkness E.F."/>
            <person name="Dougherty B.A."/>
            <person name="McKenney K."/>
            <person name="Adams M.D."/>
            <person name="Loftus B.J."/>
            <person name="Peterson S.N."/>
            <person name="Reich C.I."/>
            <person name="McNeil L.K."/>
            <person name="Badger J.H."/>
            <person name="Glodek A."/>
            <person name="Zhou L."/>
            <person name="Overbeek R."/>
            <person name="Gocayne J.D."/>
            <person name="Weidman J.F."/>
            <person name="McDonald L.A."/>
            <person name="Utterback T.R."/>
            <person name="Cotton M.D."/>
            <person name="Spriggs T."/>
            <person name="Artiach P."/>
            <person name="Kaine B.P."/>
            <person name="Sykes S.M."/>
            <person name="Sadow P.W."/>
            <person name="D'Andrea K.P."/>
            <person name="Bowman C."/>
            <person name="Fujii C."/>
            <person name="Garland S.A."/>
            <person name="Mason T.M."/>
            <person name="Olsen G.J."/>
            <person name="Fraser C.M."/>
            <person name="Smith H.O."/>
            <person name="Woese C.R."/>
            <person name="Venter J.C."/>
        </authorList>
    </citation>
    <scope>NUCLEOTIDE SEQUENCE [LARGE SCALE GENOMIC DNA]</scope>
    <source>
        <strain>ATCC 49558 / DSM 4304 / JCM 9628 / NBRC 100126 / VC-16</strain>
    </source>
</reference>
<proteinExistence type="inferred from homology"/>
<comment type="similarity">
    <text evidence="1">Belongs to the UPF0145 family.</text>
</comment>
<dbReference type="EMBL" id="AE000782">
    <property type="protein sequence ID" value="AAB90368.1"/>
    <property type="molecule type" value="Genomic_DNA"/>
</dbReference>
<dbReference type="PIR" id="E69358">
    <property type="entry name" value="E69358"/>
</dbReference>
<dbReference type="RefSeq" id="WP_010878370.1">
    <property type="nucleotide sequence ID" value="NC_000917.1"/>
</dbReference>
<dbReference type="SMR" id="O29392"/>
<dbReference type="STRING" id="224325.AF_0869"/>
<dbReference type="PaxDb" id="224325-AF_0869"/>
<dbReference type="EnsemblBacteria" id="AAB90368">
    <property type="protein sequence ID" value="AAB90368"/>
    <property type="gene ID" value="AF_0869"/>
</dbReference>
<dbReference type="KEGG" id="afu:AF_0869"/>
<dbReference type="eggNOG" id="arCOG02287">
    <property type="taxonomic scope" value="Archaea"/>
</dbReference>
<dbReference type="HOGENOM" id="CLU_117144_1_2_2"/>
<dbReference type="OrthoDB" id="59443at2157"/>
<dbReference type="PhylomeDB" id="O29392"/>
<dbReference type="Proteomes" id="UP000002199">
    <property type="component" value="Chromosome"/>
</dbReference>
<dbReference type="Gene3D" id="3.30.110.70">
    <property type="entry name" value="Hypothetical protein apc22750. Chain B"/>
    <property type="match status" value="1"/>
</dbReference>
<dbReference type="HAMAP" id="MF_00338">
    <property type="entry name" value="UPF0145"/>
    <property type="match status" value="1"/>
</dbReference>
<dbReference type="InterPro" id="IPR035439">
    <property type="entry name" value="UPF0145_dom_sf"/>
</dbReference>
<dbReference type="InterPro" id="IPR002765">
    <property type="entry name" value="UPF0145_YbjQ-like"/>
</dbReference>
<dbReference type="PANTHER" id="PTHR34068:SF2">
    <property type="entry name" value="UPF0145 PROTEIN SCO3412"/>
    <property type="match status" value="1"/>
</dbReference>
<dbReference type="PANTHER" id="PTHR34068">
    <property type="entry name" value="UPF0145 PROTEIN YBJQ"/>
    <property type="match status" value="1"/>
</dbReference>
<dbReference type="Pfam" id="PF01906">
    <property type="entry name" value="YbjQ_1"/>
    <property type="match status" value="1"/>
</dbReference>
<dbReference type="SUPFAM" id="SSF117782">
    <property type="entry name" value="YbjQ-like"/>
    <property type="match status" value="1"/>
</dbReference>
<feature type="chain" id="PRO_0000138492" description="UPF0145 protein AF_0869">
    <location>
        <begin position="1"/>
        <end position="108"/>
    </location>
</feature>
<keyword id="KW-1185">Reference proteome</keyword>
<name>Y869_ARCFU</name>
<organism>
    <name type="scientific">Archaeoglobus fulgidus (strain ATCC 49558 / DSM 4304 / JCM 9628 / NBRC 100126 / VC-16)</name>
    <dbReference type="NCBI Taxonomy" id="224325"/>
    <lineage>
        <taxon>Archaea</taxon>
        <taxon>Methanobacteriati</taxon>
        <taxon>Methanobacteriota</taxon>
        <taxon>Archaeoglobi</taxon>
        <taxon>Archaeoglobales</taxon>
        <taxon>Archaeoglobaceae</taxon>
        <taxon>Archaeoglobus</taxon>
    </lineage>
</organism>
<protein>
    <recommendedName>
        <fullName>UPF0145 protein AF_0869</fullName>
    </recommendedName>
</protein>
<gene>
    <name type="ordered locus">AF_0869</name>
</gene>